<keyword id="KW-0963">Cytoplasm</keyword>
<keyword id="KW-0224">Dipeptidase</keyword>
<keyword id="KW-0378">Hydrolase</keyword>
<keyword id="KW-0645">Protease</keyword>
<keyword id="KW-0720">Serine protease</keyword>
<protein>
    <recommendedName>
        <fullName evidence="1">Peptidase E</fullName>
        <ecNumber evidence="1">3.4.13.21</ecNumber>
    </recommendedName>
    <alternativeName>
        <fullName evidence="1">Alpha-aspartyl dipeptidase</fullName>
    </alternativeName>
    <alternativeName>
        <fullName evidence="1">Asp-specific dipeptidase</fullName>
    </alternativeName>
    <alternativeName>
        <fullName evidence="1">Dipeptidase E</fullName>
    </alternativeName>
</protein>
<gene>
    <name evidence="1" type="primary">pepE</name>
    <name type="ordered locus">EcolC_4009</name>
</gene>
<organism>
    <name type="scientific">Escherichia coli (strain ATCC 8739 / DSM 1576 / NBRC 3972 / NCIMB 8545 / WDCM 00012 / Crooks)</name>
    <dbReference type="NCBI Taxonomy" id="481805"/>
    <lineage>
        <taxon>Bacteria</taxon>
        <taxon>Pseudomonadati</taxon>
        <taxon>Pseudomonadota</taxon>
        <taxon>Gammaproteobacteria</taxon>
        <taxon>Enterobacterales</taxon>
        <taxon>Enterobacteriaceae</taxon>
        <taxon>Escherichia</taxon>
    </lineage>
</organism>
<evidence type="ECO:0000255" key="1">
    <source>
        <dbReference type="HAMAP-Rule" id="MF_00510"/>
    </source>
</evidence>
<feature type="chain" id="PRO_1000081585" description="Peptidase E">
    <location>
        <begin position="1"/>
        <end position="229"/>
    </location>
</feature>
<feature type="active site" description="Charge relay system" evidence="1">
    <location>
        <position position="120"/>
    </location>
</feature>
<feature type="active site" description="Charge relay system" evidence="1">
    <location>
        <position position="135"/>
    </location>
</feature>
<feature type="active site" description="Charge relay system" evidence="1">
    <location>
        <position position="157"/>
    </location>
</feature>
<name>PEPE_ECOLC</name>
<dbReference type="EC" id="3.4.13.21" evidence="1"/>
<dbReference type="EMBL" id="CP000946">
    <property type="protein sequence ID" value="ACA79608.1"/>
    <property type="molecule type" value="Genomic_DNA"/>
</dbReference>
<dbReference type="RefSeq" id="WP_000421763.1">
    <property type="nucleotide sequence ID" value="NZ_MTFT01000033.1"/>
</dbReference>
<dbReference type="SMR" id="B1IUN1"/>
<dbReference type="MEROPS" id="S51.001"/>
<dbReference type="GeneID" id="93777874"/>
<dbReference type="KEGG" id="ecl:EcolC_4009"/>
<dbReference type="HOGENOM" id="CLU_071689_0_0_6"/>
<dbReference type="GO" id="GO:0005737">
    <property type="term" value="C:cytoplasm"/>
    <property type="evidence" value="ECO:0007669"/>
    <property type="project" value="UniProtKB-SubCell"/>
</dbReference>
<dbReference type="GO" id="GO:0016805">
    <property type="term" value="F:dipeptidase activity"/>
    <property type="evidence" value="ECO:0007669"/>
    <property type="project" value="UniProtKB-UniRule"/>
</dbReference>
<dbReference type="GO" id="GO:0008236">
    <property type="term" value="F:serine-type peptidase activity"/>
    <property type="evidence" value="ECO:0007669"/>
    <property type="project" value="UniProtKB-KW"/>
</dbReference>
<dbReference type="GO" id="GO:0006508">
    <property type="term" value="P:proteolysis"/>
    <property type="evidence" value="ECO:0007669"/>
    <property type="project" value="UniProtKB-UniRule"/>
</dbReference>
<dbReference type="CDD" id="cd03146">
    <property type="entry name" value="GAT1_Peptidase_E"/>
    <property type="match status" value="1"/>
</dbReference>
<dbReference type="FunFam" id="3.40.50.880:FF:000007">
    <property type="entry name" value="Peptidase E"/>
    <property type="match status" value="1"/>
</dbReference>
<dbReference type="Gene3D" id="3.40.50.880">
    <property type="match status" value="1"/>
</dbReference>
<dbReference type="HAMAP" id="MF_00510">
    <property type="entry name" value="Peptidase_E"/>
    <property type="match status" value="1"/>
</dbReference>
<dbReference type="InterPro" id="IPR029062">
    <property type="entry name" value="Class_I_gatase-like"/>
</dbReference>
<dbReference type="InterPro" id="IPR005320">
    <property type="entry name" value="Peptidase_S51"/>
</dbReference>
<dbReference type="InterPro" id="IPR023172">
    <property type="entry name" value="Peptidase_S51_dipeptidase-E"/>
</dbReference>
<dbReference type="NCBIfam" id="NF003642">
    <property type="entry name" value="PRK05282.1"/>
    <property type="match status" value="1"/>
</dbReference>
<dbReference type="PANTHER" id="PTHR20842:SF0">
    <property type="entry name" value="ALPHA-ASPARTYL DIPEPTIDASE"/>
    <property type="match status" value="1"/>
</dbReference>
<dbReference type="PANTHER" id="PTHR20842">
    <property type="entry name" value="PROTEASE S51 ALPHA-ASPARTYL DIPEPTIDASE"/>
    <property type="match status" value="1"/>
</dbReference>
<dbReference type="Pfam" id="PF03575">
    <property type="entry name" value="Peptidase_S51"/>
    <property type="match status" value="1"/>
</dbReference>
<dbReference type="SUPFAM" id="SSF52317">
    <property type="entry name" value="Class I glutamine amidotransferase-like"/>
    <property type="match status" value="1"/>
</dbReference>
<accession>B1IUN1</accession>
<reference key="1">
    <citation type="submission" date="2008-02" db="EMBL/GenBank/DDBJ databases">
        <title>Complete sequence of Escherichia coli C str. ATCC 8739.</title>
        <authorList>
            <person name="Copeland A."/>
            <person name="Lucas S."/>
            <person name="Lapidus A."/>
            <person name="Glavina del Rio T."/>
            <person name="Dalin E."/>
            <person name="Tice H."/>
            <person name="Bruce D."/>
            <person name="Goodwin L."/>
            <person name="Pitluck S."/>
            <person name="Kiss H."/>
            <person name="Brettin T."/>
            <person name="Detter J.C."/>
            <person name="Han C."/>
            <person name="Kuske C.R."/>
            <person name="Schmutz J."/>
            <person name="Larimer F."/>
            <person name="Land M."/>
            <person name="Hauser L."/>
            <person name="Kyrpides N."/>
            <person name="Mikhailova N."/>
            <person name="Ingram L."/>
            <person name="Richardson P."/>
        </authorList>
    </citation>
    <scope>NUCLEOTIDE SEQUENCE [LARGE SCALE GENOMIC DNA]</scope>
    <source>
        <strain>ATCC 8739 / DSM 1576 / NBRC 3972 / NCIMB 8545 / WDCM 00012 / Crooks</strain>
    </source>
</reference>
<comment type="function">
    <text evidence="1">Hydrolyzes dipeptides containing N-terminal aspartate residues. May play a role in allowing the cell to use peptide aspartate to spare carbon otherwise required for the synthesis of the aspartate family of amino acids.</text>
</comment>
<comment type="catalytic activity">
    <reaction evidence="1">
        <text>Dipeptidase E catalyzes the hydrolysis of dipeptides Asp-|-Xaa. It does not act on peptides with N-terminal Glu, Asn or Gln, nor does it cleave isoaspartyl peptides.</text>
        <dbReference type="EC" id="3.4.13.21"/>
    </reaction>
</comment>
<comment type="subcellular location">
    <subcellularLocation>
        <location evidence="1">Cytoplasm</location>
    </subcellularLocation>
</comment>
<comment type="similarity">
    <text evidence="1">Belongs to the peptidase S51 family.</text>
</comment>
<sequence>MELLLLSNSTLPGKAWLEHALPLIAEQLQGRRSAVFIPFAGVTQTWDDYTAKTAAVLAPLGVSVTGIHSVVDPVAAIENAEIVIVGGGNTFQLLKQCRERGLLAPITDVVKRGALYIGWSAGANLACPTIRTTNDMPIVDPQGFDALNLFPLQINPHFTNALPEGHKGETREQRIRELLVVAPELTIIGLPEGNWITVSKGHATLGGPNTTYVFKAGEEAVPLEAGHRF</sequence>
<proteinExistence type="inferred from homology"/>